<reference key="1">
    <citation type="journal article" date="2008" name="PLoS ONE">
        <title>Genetic basis of virulence attenuation revealed by comparative genomic analysis of Mycobacterium tuberculosis strain H37Ra versus H37Rv.</title>
        <authorList>
            <person name="Zheng H."/>
            <person name="Lu L."/>
            <person name="Wang B."/>
            <person name="Pu S."/>
            <person name="Zhang X."/>
            <person name="Zhu G."/>
            <person name="Shi W."/>
            <person name="Zhang L."/>
            <person name="Wang H."/>
            <person name="Wang S."/>
            <person name="Zhao G."/>
            <person name="Zhang Y."/>
        </authorList>
    </citation>
    <scope>NUCLEOTIDE SEQUENCE [LARGE SCALE GENOMIC DNA]</scope>
    <source>
        <strain>ATCC 25177 / H37Ra</strain>
    </source>
</reference>
<comment type="function">
    <text evidence="1">Removes the formyl group from the N-terminal Met of newly synthesized proteins. Requires at least a dipeptide for an efficient rate of reaction. N-terminal L-methionine is a prerequisite for activity but the enzyme has broad specificity at other positions.</text>
</comment>
<comment type="catalytic activity">
    <reaction evidence="1">
        <text>N-terminal N-formyl-L-methionyl-[peptide] + H2O = N-terminal L-methionyl-[peptide] + formate</text>
        <dbReference type="Rhea" id="RHEA:24420"/>
        <dbReference type="Rhea" id="RHEA-COMP:10639"/>
        <dbReference type="Rhea" id="RHEA-COMP:10640"/>
        <dbReference type="ChEBI" id="CHEBI:15377"/>
        <dbReference type="ChEBI" id="CHEBI:15740"/>
        <dbReference type="ChEBI" id="CHEBI:49298"/>
        <dbReference type="ChEBI" id="CHEBI:64731"/>
        <dbReference type="EC" id="3.5.1.88"/>
    </reaction>
</comment>
<comment type="cofactor">
    <cofactor evidence="1">
        <name>Fe(2+)</name>
        <dbReference type="ChEBI" id="CHEBI:29033"/>
    </cofactor>
    <text evidence="1">Binds 1 Fe(2+) ion.</text>
</comment>
<comment type="similarity">
    <text evidence="1">Belongs to the polypeptide deformylase family.</text>
</comment>
<dbReference type="EC" id="3.5.1.88" evidence="1"/>
<dbReference type="EMBL" id="CP000611">
    <property type="protein sequence ID" value="ABQ72155.1"/>
    <property type="molecule type" value="Genomic_DNA"/>
</dbReference>
<dbReference type="RefSeq" id="WP_003402185.1">
    <property type="nucleotide sequence ID" value="NZ_CP016972.1"/>
</dbReference>
<dbReference type="SMR" id="A5TZF5"/>
<dbReference type="KEGG" id="mra:MRA_0434"/>
<dbReference type="eggNOG" id="COG0242">
    <property type="taxonomic scope" value="Bacteria"/>
</dbReference>
<dbReference type="HOGENOM" id="CLU_061901_1_2_11"/>
<dbReference type="Proteomes" id="UP000001988">
    <property type="component" value="Chromosome"/>
</dbReference>
<dbReference type="GO" id="GO:0046872">
    <property type="term" value="F:metal ion binding"/>
    <property type="evidence" value="ECO:0007669"/>
    <property type="project" value="UniProtKB-KW"/>
</dbReference>
<dbReference type="GO" id="GO:0042586">
    <property type="term" value="F:peptide deformylase activity"/>
    <property type="evidence" value="ECO:0007669"/>
    <property type="project" value="UniProtKB-UniRule"/>
</dbReference>
<dbReference type="GO" id="GO:0043686">
    <property type="term" value="P:co-translational protein modification"/>
    <property type="evidence" value="ECO:0007669"/>
    <property type="project" value="TreeGrafter"/>
</dbReference>
<dbReference type="GO" id="GO:0006412">
    <property type="term" value="P:translation"/>
    <property type="evidence" value="ECO:0007669"/>
    <property type="project" value="UniProtKB-UniRule"/>
</dbReference>
<dbReference type="CDD" id="cd00487">
    <property type="entry name" value="Pep_deformylase"/>
    <property type="match status" value="1"/>
</dbReference>
<dbReference type="FunFam" id="3.90.45.10:FF:000011">
    <property type="entry name" value="Peptide deformylase"/>
    <property type="match status" value="1"/>
</dbReference>
<dbReference type="Gene3D" id="3.90.45.10">
    <property type="entry name" value="Peptide deformylase"/>
    <property type="match status" value="1"/>
</dbReference>
<dbReference type="HAMAP" id="MF_00163">
    <property type="entry name" value="Pep_deformylase"/>
    <property type="match status" value="1"/>
</dbReference>
<dbReference type="InterPro" id="IPR023635">
    <property type="entry name" value="Peptide_deformylase"/>
</dbReference>
<dbReference type="InterPro" id="IPR036821">
    <property type="entry name" value="Peptide_deformylase_sf"/>
</dbReference>
<dbReference type="NCBIfam" id="TIGR00079">
    <property type="entry name" value="pept_deformyl"/>
    <property type="match status" value="1"/>
</dbReference>
<dbReference type="NCBIfam" id="NF001159">
    <property type="entry name" value="PRK00150.1-3"/>
    <property type="match status" value="1"/>
</dbReference>
<dbReference type="NCBIfam" id="NF009483">
    <property type="entry name" value="PRK12846.1-4"/>
    <property type="match status" value="1"/>
</dbReference>
<dbReference type="PANTHER" id="PTHR10458">
    <property type="entry name" value="PEPTIDE DEFORMYLASE"/>
    <property type="match status" value="1"/>
</dbReference>
<dbReference type="PANTHER" id="PTHR10458:SF2">
    <property type="entry name" value="PEPTIDE DEFORMYLASE, MITOCHONDRIAL"/>
    <property type="match status" value="1"/>
</dbReference>
<dbReference type="Pfam" id="PF01327">
    <property type="entry name" value="Pep_deformylase"/>
    <property type="match status" value="1"/>
</dbReference>
<dbReference type="PIRSF" id="PIRSF004749">
    <property type="entry name" value="Pep_def"/>
    <property type="match status" value="1"/>
</dbReference>
<dbReference type="PRINTS" id="PR01576">
    <property type="entry name" value="PDEFORMYLASE"/>
</dbReference>
<dbReference type="SUPFAM" id="SSF56420">
    <property type="entry name" value="Peptide deformylase"/>
    <property type="match status" value="1"/>
</dbReference>
<proteinExistence type="inferred from homology"/>
<protein>
    <recommendedName>
        <fullName evidence="1">Peptide deformylase</fullName>
        <shortName evidence="1">PDF</shortName>
        <ecNumber evidence="1">3.5.1.88</ecNumber>
    </recommendedName>
    <alternativeName>
        <fullName evidence="1">Polypeptide deformylase</fullName>
    </alternativeName>
</protein>
<name>DEF_MYCTA</name>
<keyword id="KW-0378">Hydrolase</keyword>
<keyword id="KW-0408">Iron</keyword>
<keyword id="KW-0479">Metal-binding</keyword>
<keyword id="KW-0648">Protein biosynthesis</keyword>
<keyword id="KW-1185">Reference proteome</keyword>
<feature type="chain" id="PRO_0000301063" description="Peptide deformylase">
    <location>
        <begin position="1"/>
        <end position="197"/>
    </location>
</feature>
<feature type="active site" evidence="1">
    <location>
        <position position="149"/>
    </location>
</feature>
<feature type="binding site" evidence="1">
    <location>
        <position position="106"/>
    </location>
    <ligand>
        <name>Fe cation</name>
        <dbReference type="ChEBI" id="CHEBI:24875"/>
    </ligand>
</feature>
<feature type="binding site" evidence="1">
    <location>
        <position position="148"/>
    </location>
    <ligand>
        <name>Fe cation</name>
        <dbReference type="ChEBI" id="CHEBI:24875"/>
    </ligand>
</feature>
<feature type="binding site" evidence="1">
    <location>
        <position position="152"/>
    </location>
    <ligand>
        <name>Fe cation</name>
        <dbReference type="ChEBI" id="CHEBI:24875"/>
    </ligand>
</feature>
<organism>
    <name type="scientific">Mycobacterium tuberculosis (strain ATCC 25177 / H37Ra)</name>
    <dbReference type="NCBI Taxonomy" id="419947"/>
    <lineage>
        <taxon>Bacteria</taxon>
        <taxon>Bacillati</taxon>
        <taxon>Actinomycetota</taxon>
        <taxon>Actinomycetes</taxon>
        <taxon>Mycobacteriales</taxon>
        <taxon>Mycobacteriaceae</taxon>
        <taxon>Mycobacterium</taxon>
        <taxon>Mycobacterium tuberculosis complex</taxon>
    </lineage>
</organism>
<accession>A5TZF5</accession>
<evidence type="ECO:0000255" key="1">
    <source>
        <dbReference type="HAMAP-Rule" id="MF_00163"/>
    </source>
</evidence>
<gene>
    <name evidence="1" type="primary">def</name>
    <name type="ordered locus">MRA_0434</name>
</gene>
<sequence length="197" mass="20939">MAVVPIRIVGDPVLHTATTPVTVAADGSLPADLAQLIATMYDTMDAANGVGLAANQIGCSLRLFVYDCAADRAMTARRRGVVINPVLETSEIPETMPDPDTDDEGCLSVPGESFPTGRAKWARVTGLDADGSPVSIEGTGLFARMLQHETGHLDGFLYLDRLIGRYARNAKRAVKSHGWGVPGLSWLPGEDPDPFGH</sequence>